<comment type="catalytic activity">
    <reaction evidence="1">
        <text>D-tagatofuranose 6-phosphate + ATP = D-tagatofuranose 1,6-bisphosphate + ADP + H(+)</text>
        <dbReference type="Rhea" id="RHEA:12420"/>
        <dbReference type="ChEBI" id="CHEBI:15378"/>
        <dbReference type="ChEBI" id="CHEBI:30616"/>
        <dbReference type="ChEBI" id="CHEBI:58694"/>
        <dbReference type="ChEBI" id="CHEBI:58695"/>
        <dbReference type="ChEBI" id="CHEBI:456216"/>
        <dbReference type="EC" id="2.7.1.144"/>
    </reaction>
</comment>
<comment type="pathway">
    <text evidence="1">Carbohydrate metabolism; D-tagatose 6-phosphate degradation; D-glyceraldehyde 3-phosphate and glycerone phosphate from D-tagatose 6-phosphate: step 1/2.</text>
</comment>
<comment type="similarity">
    <text evidence="1">Belongs to the carbohydrate kinase PfkB family. LacC subfamily.</text>
</comment>
<comment type="sequence caution" evidence="2">
    <conflict type="erroneous initiation">
        <sequence resource="EMBL-CDS" id="BAC64750"/>
    </conflict>
</comment>
<organism>
    <name type="scientific">Streptococcus pyogenes serotype M3 (strain SSI-1)</name>
    <dbReference type="NCBI Taxonomy" id="193567"/>
    <lineage>
        <taxon>Bacteria</taxon>
        <taxon>Bacillati</taxon>
        <taxon>Bacillota</taxon>
        <taxon>Bacilli</taxon>
        <taxon>Lactobacillales</taxon>
        <taxon>Streptococcaceae</taxon>
        <taxon>Streptococcus</taxon>
    </lineage>
</organism>
<evidence type="ECO:0000255" key="1">
    <source>
        <dbReference type="HAMAP-Rule" id="MF_01557"/>
    </source>
</evidence>
<evidence type="ECO:0000305" key="2"/>
<sequence>MILTVTLNPAIDVSYPLDELKCDTVNRVVDVTKTPGGKGLNVCRVLNEFGETVKATGCIGGESGDFIINHLPDSILSRFYKISGYTRTCIAILHEGNQTEILEKGPMLSVDEIDGFTHHFKYLLNDVDVVTLSGSLPAGMPDDYYQKLIGIANLNGKKTVLDCSGNALEAVLKGDSKPTVIKPNLEELSQLLGKEMTKDFKALKAVLQDELFEGIEWIIVSLGADGVFAKHKDTFYNVDIPKIKIVSAVGSGDSTVAGIASGLANDEDDRALLTKANVLGMLNAQEKTTGHVNMANYDKLYQSIKVKEV</sequence>
<accession>P0DC13</accession>
<accession>Q878A2</accession>
<accession>Q8K5U8</accession>
<gene>
    <name evidence="1" type="primary">lacC</name>
    <name type="ordered locus">SPs1655</name>
</gene>
<name>LACC_STRPQ</name>
<keyword id="KW-0067">ATP-binding</keyword>
<keyword id="KW-0418">Kinase</keyword>
<keyword id="KW-0423">Lactose metabolism</keyword>
<keyword id="KW-0547">Nucleotide-binding</keyword>
<keyword id="KW-0808">Transferase</keyword>
<reference key="1">
    <citation type="journal article" date="2003" name="Genome Res.">
        <title>Genome sequence of an M3 strain of Streptococcus pyogenes reveals a large-scale genomic rearrangement in invasive strains and new insights into phage evolution.</title>
        <authorList>
            <person name="Nakagawa I."/>
            <person name="Kurokawa K."/>
            <person name="Yamashita A."/>
            <person name="Nakata M."/>
            <person name="Tomiyasu Y."/>
            <person name="Okahashi N."/>
            <person name="Kawabata S."/>
            <person name="Yamazaki K."/>
            <person name="Shiba T."/>
            <person name="Yasunaga T."/>
            <person name="Hayashi H."/>
            <person name="Hattori M."/>
            <person name="Hamada S."/>
        </authorList>
    </citation>
    <scope>NUCLEOTIDE SEQUENCE [LARGE SCALE GENOMIC DNA]</scope>
    <source>
        <strain>SSI-1</strain>
    </source>
</reference>
<proteinExistence type="inferred from homology"/>
<protein>
    <recommendedName>
        <fullName evidence="1">Tagatose-6-phosphate kinase</fullName>
        <ecNumber evidence="1">2.7.1.144</ecNumber>
    </recommendedName>
    <alternativeName>
        <fullName evidence="1">Phosphotagatokinase</fullName>
    </alternativeName>
</protein>
<feature type="chain" id="PRO_0000411394" description="Tagatose-6-phosphate kinase">
    <location>
        <begin position="1"/>
        <end position="309"/>
    </location>
</feature>
<dbReference type="EC" id="2.7.1.144" evidence="1"/>
<dbReference type="EMBL" id="BA000034">
    <property type="protein sequence ID" value="BAC64750.1"/>
    <property type="status" value="ALT_INIT"/>
    <property type="molecule type" value="Genomic_DNA"/>
</dbReference>
<dbReference type="RefSeq" id="WP_011055004.1">
    <property type="nucleotide sequence ID" value="NC_004606.1"/>
</dbReference>
<dbReference type="SMR" id="P0DC13"/>
<dbReference type="KEGG" id="sps:SPs1655"/>
<dbReference type="HOGENOM" id="CLU_050013_5_0_9"/>
<dbReference type="UniPathway" id="UPA00704">
    <property type="reaction ID" value="UER00715"/>
</dbReference>
<dbReference type="GO" id="GO:0005829">
    <property type="term" value="C:cytosol"/>
    <property type="evidence" value="ECO:0007669"/>
    <property type="project" value="TreeGrafter"/>
</dbReference>
<dbReference type="GO" id="GO:0005524">
    <property type="term" value="F:ATP binding"/>
    <property type="evidence" value="ECO:0007669"/>
    <property type="project" value="UniProtKB-KW"/>
</dbReference>
<dbReference type="GO" id="GO:0008443">
    <property type="term" value="F:phosphofructokinase activity"/>
    <property type="evidence" value="ECO:0007669"/>
    <property type="project" value="TreeGrafter"/>
</dbReference>
<dbReference type="GO" id="GO:0009024">
    <property type="term" value="F:tagatose-6-phosphate kinase activity"/>
    <property type="evidence" value="ECO:0007669"/>
    <property type="project" value="UniProtKB-UniRule"/>
</dbReference>
<dbReference type="GO" id="GO:2001059">
    <property type="term" value="P:D-tagatose 6-phosphate catabolic process"/>
    <property type="evidence" value="ECO:0007669"/>
    <property type="project" value="UniProtKB-UniRule"/>
</dbReference>
<dbReference type="GO" id="GO:0019512">
    <property type="term" value="P:lactose catabolic process via tagatose-6-phosphate"/>
    <property type="evidence" value="ECO:0007669"/>
    <property type="project" value="InterPro"/>
</dbReference>
<dbReference type="CDD" id="cd01164">
    <property type="entry name" value="FruK_PfkB_like"/>
    <property type="match status" value="1"/>
</dbReference>
<dbReference type="FunFam" id="3.40.1190.20:FF:000001">
    <property type="entry name" value="Phosphofructokinase"/>
    <property type="match status" value="1"/>
</dbReference>
<dbReference type="Gene3D" id="3.40.1190.20">
    <property type="match status" value="1"/>
</dbReference>
<dbReference type="HAMAP" id="MF_01557">
    <property type="entry name" value="LacC"/>
    <property type="match status" value="1"/>
</dbReference>
<dbReference type="InterPro" id="IPR005926">
    <property type="entry name" value="LacC"/>
</dbReference>
<dbReference type="InterPro" id="IPR011611">
    <property type="entry name" value="PfkB_dom"/>
</dbReference>
<dbReference type="InterPro" id="IPR029056">
    <property type="entry name" value="Ribokinase-like"/>
</dbReference>
<dbReference type="InterPro" id="IPR017583">
    <property type="entry name" value="Tagatose/fructose_Pkinase"/>
</dbReference>
<dbReference type="NCBIfam" id="TIGR03168">
    <property type="entry name" value="1-PFK"/>
    <property type="match status" value="1"/>
</dbReference>
<dbReference type="NCBIfam" id="TIGR01231">
    <property type="entry name" value="lacC"/>
    <property type="match status" value="1"/>
</dbReference>
<dbReference type="NCBIfam" id="NF010033">
    <property type="entry name" value="PRK13508.1"/>
    <property type="match status" value="1"/>
</dbReference>
<dbReference type="PANTHER" id="PTHR46566:SF5">
    <property type="entry name" value="1-PHOSPHOFRUCTOKINASE"/>
    <property type="match status" value="1"/>
</dbReference>
<dbReference type="PANTHER" id="PTHR46566">
    <property type="entry name" value="1-PHOSPHOFRUCTOKINASE-RELATED"/>
    <property type="match status" value="1"/>
</dbReference>
<dbReference type="Pfam" id="PF00294">
    <property type="entry name" value="PfkB"/>
    <property type="match status" value="1"/>
</dbReference>
<dbReference type="PIRSF" id="PIRSF000535">
    <property type="entry name" value="1PFK/6PFK/LacC"/>
    <property type="match status" value="1"/>
</dbReference>
<dbReference type="SUPFAM" id="SSF53613">
    <property type="entry name" value="Ribokinase-like"/>
    <property type="match status" value="1"/>
</dbReference>